<gene>
    <name evidence="1" type="primary">L2</name>
</gene>
<accession>P06418</accession>
<dbReference type="EMBL" id="M12732">
    <property type="protein sequence ID" value="AAA46963.1"/>
    <property type="molecule type" value="Genomic_DNA"/>
</dbReference>
<dbReference type="PIR" id="A03650">
    <property type="entry name" value="P2WL33"/>
</dbReference>
<dbReference type="Proteomes" id="UP000009118">
    <property type="component" value="Genome"/>
</dbReference>
<dbReference type="GO" id="GO:0043657">
    <property type="term" value="C:host cell"/>
    <property type="evidence" value="ECO:0007669"/>
    <property type="project" value="GOC"/>
</dbReference>
<dbReference type="GO" id="GO:0044174">
    <property type="term" value="C:host cell endosome"/>
    <property type="evidence" value="ECO:0007669"/>
    <property type="project" value="UniProtKB-KW"/>
</dbReference>
<dbReference type="GO" id="GO:0044177">
    <property type="term" value="C:host cell Golgi apparatus"/>
    <property type="evidence" value="ECO:0007669"/>
    <property type="project" value="UniProtKB-SubCell"/>
</dbReference>
<dbReference type="GO" id="GO:0042025">
    <property type="term" value="C:host cell nucleus"/>
    <property type="evidence" value="ECO:0007669"/>
    <property type="project" value="UniProtKB-SubCell"/>
</dbReference>
<dbReference type="GO" id="GO:0019028">
    <property type="term" value="C:viral capsid"/>
    <property type="evidence" value="ECO:0007669"/>
    <property type="project" value="UniProtKB-UniRule"/>
</dbReference>
<dbReference type="GO" id="GO:0003677">
    <property type="term" value="F:DNA binding"/>
    <property type="evidence" value="ECO:0007669"/>
    <property type="project" value="UniProtKB-UniRule"/>
</dbReference>
<dbReference type="GO" id="GO:0005198">
    <property type="term" value="F:structural molecule activity"/>
    <property type="evidence" value="ECO:0007669"/>
    <property type="project" value="UniProtKB-UniRule"/>
</dbReference>
<dbReference type="GO" id="GO:0075521">
    <property type="term" value="P:microtubule-dependent intracellular transport of viral material towards nucleus"/>
    <property type="evidence" value="ECO:0007669"/>
    <property type="project" value="UniProtKB-UniRule"/>
</dbReference>
<dbReference type="GO" id="GO:0046718">
    <property type="term" value="P:symbiont entry into host cell"/>
    <property type="evidence" value="ECO:0007669"/>
    <property type="project" value="UniProtKB-KW"/>
</dbReference>
<dbReference type="GO" id="GO:0075732">
    <property type="term" value="P:viral penetration into host nucleus"/>
    <property type="evidence" value="ECO:0007669"/>
    <property type="project" value="UniProtKB-KW"/>
</dbReference>
<dbReference type="HAMAP" id="MF_04003">
    <property type="entry name" value="PPV_L2"/>
    <property type="match status" value="1"/>
</dbReference>
<dbReference type="InterPro" id="IPR000784">
    <property type="entry name" value="Late_L2"/>
</dbReference>
<dbReference type="Pfam" id="PF00513">
    <property type="entry name" value="Late_protein_L2"/>
    <property type="match status" value="1"/>
</dbReference>
<organismHost>
    <name type="scientific">Homo sapiens</name>
    <name type="common">Human</name>
    <dbReference type="NCBI Taxonomy" id="9606"/>
</organismHost>
<sequence length="467" mass="50596">MRHKRSTRRKRASATQLYQTCKATGTCPPDVIPKVEGSTIADQILKYGSLGVFFGGLGIGTGSGSGGRTGYVPIGTDPPTAAIPLQPIRPPVTVDTVGPLDSSIVSLIEETSFIEAGAPAPSIPTPSGFDVTTSADTTPAIINVSSVGESSIQTISTHLNPTFTEPSVLHPPAPAEASGHFIFSSPTVSTQSYENIPMDTFVVSTDSSNVTSSTPIPGSRPVARLGLYSRNTQQVKVVDPAFLTSPHKLITYDNPAFESFDPEDTLQFQHSDISPAPDPDFLDIIALHRPAITSRRHTVRFSRVGQKATLKTRSGKQIGARIHYYQDLSPIVPLDHTVPNEQYELQPLHDTSTSSYSINDGLYDVYADDVDNVHTPMQHSYSTFATTRTSNVSIPLNTGFDTPVMSGPDIPSPLFPTSSPFVPISPFFPFDTIVVDGADFVLHPSYFILRRRRKRFPYFFTDVRVAA</sequence>
<comment type="function">
    <text evidence="1">Minor protein of the capsid that localizes along the inner surface of the virion, within the central cavities beneath the L1 pentamers. Plays a role in capsid stabilization through interaction with the major capsid protein L1. Once the virion enters the host cell, L2 escorts the genomic DNA into the nucleus by promoting escape from the endosomal compartments and traffic through the host Golgi network. Mechanistically, the C-terminus of L2 possesses a cell-penetrating peptide that protudes from the host endosome, interacts with host cytoplasmic retromer cargo and thereby mediates the capsid delivery to the host trans-Golgi network. Plays a role through its interaction with host dynein in the intracellular microtubule-dependent transport of viral capsid toward the nucleus. Mediates the viral genome import into the nucleus through binding to host importins. Once within the nucleus, L2 localizes viral genomes to host PML bodies in order to activate early gene expression for establishment of infection. Later on, promotes late gene expression by interacting with the viral E2 protein and by inhibiting its transcriptional activation functions. During virion assembly, encapsidates the genome by direct interaction with the viral DNA.</text>
</comment>
<comment type="subunit">
    <text evidence="1">Interacts with major capsid protein L1. Interacts with E2; this interaction inhibits E2 transcriptional activity but not the DNA replication function E2. Interacts with host GADD45GIP1. Interacts with host HSPA8; this interaction is required for L2 nuclear translocation. Interacts with host importins KPNB2 and KPNB3. Forms a complex with importin alpha2-beta1 heterodimers via interaction with the importin alpha2 adapter. Interacts with host DYNLT1; this interaction is essential for virus intracellular transport during entry. Interacts (via C-terminus) with host retromer subunits VPS35 and VPS29.</text>
</comment>
<comment type="subcellular location">
    <subcellularLocation>
        <location evidence="1">Virion</location>
    </subcellularLocation>
    <subcellularLocation>
        <location evidence="1">Host nucleus</location>
    </subcellularLocation>
    <subcellularLocation>
        <location evidence="1">Host early endosome</location>
    </subcellularLocation>
    <subcellularLocation>
        <location evidence="1">Host Golgi apparatus</location>
    </subcellularLocation>
</comment>
<comment type="PTM">
    <text evidence="1">Highly phosphorylated.</text>
</comment>
<comment type="similarity">
    <text evidence="1">Belongs to the papillomaviridae L2 protein family.</text>
</comment>
<feature type="chain" id="PRO_0000133600" description="Minor capsid protein L2">
    <location>
        <begin position="1"/>
        <end position="467"/>
    </location>
</feature>
<feature type="short sequence motif" description="Nuclear localization signal" evidence="1">
    <location>
        <begin position="1"/>
        <end position="12"/>
    </location>
</feature>
<feature type="short sequence motif" description="Nuclear localization signal" evidence="1">
    <location>
        <begin position="448"/>
        <end position="456"/>
    </location>
</feature>
<feature type="disulfide bond" evidence="1">
    <location>
        <begin position="21"/>
        <end position="27"/>
    </location>
</feature>
<proteinExistence type="inferred from homology"/>
<name>VL2_HPV33</name>
<organism>
    <name type="scientific">Human papillomavirus 33</name>
    <dbReference type="NCBI Taxonomy" id="10586"/>
    <lineage>
        <taxon>Viruses</taxon>
        <taxon>Monodnaviria</taxon>
        <taxon>Shotokuvirae</taxon>
        <taxon>Cossaviricota</taxon>
        <taxon>Papovaviricetes</taxon>
        <taxon>Zurhausenvirales</taxon>
        <taxon>Papillomaviridae</taxon>
        <taxon>Firstpapillomavirinae</taxon>
        <taxon>Alphapapillomavirus</taxon>
        <taxon>Alphapapillomavirus 9</taxon>
    </lineage>
</organism>
<reference key="1">
    <citation type="journal article" date="1986" name="J. Virol.">
        <title>Genome organization and nucleotide sequence of human papillomavirus type 33, which is associated with cervical cancer.</title>
        <authorList>
            <person name="Cole S.T."/>
            <person name="Streeck R.E."/>
        </authorList>
    </citation>
    <scope>NUCLEOTIDE SEQUENCE [GENOMIC DNA]</scope>
</reference>
<evidence type="ECO:0000255" key="1">
    <source>
        <dbReference type="HAMAP-Rule" id="MF_04003"/>
    </source>
</evidence>
<protein>
    <recommendedName>
        <fullName evidence="1">Minor capsid protein L2</fullName>
    </recommendedName>
</protein>
<keyword id="KW-0167">Capsid protein</keyword>
<keyword id="KW-1176">Cytoplasmic inwards viral transport</keyword>
<keyword id="KW-1015">Disulfide bond</keyword>
<keyword id="KW-0238">DNA-binding</keyword>
<keyword id="KW-1039">Host endosome</keyword>
<keyword id="KW-1040">Host Golgi apparatus</keyword>
<keyword id="KW-1048">Host nucleus</keyword>
<keyword id="KW-0945">Host-virus interaction</keyword>
<keyword id="KW-0426">Late protein</keyword>
<keyword id="KW-1177">Microtubular inwards viral transport</keyword>
<keyword id="KW-0597">Phosphoprotein</keyword>
<keyword id="KW-1163">Viral penetration into host nucleus</keyword>
<keyword id="KW-0946">Virion</keyword>
<keyword id="KW-1160">Virus entry into host cell</keyword>